<evidence type="ECO:0000255" key="1">
    <source>
        <dbReference type="HAMAP-Rule" id="MF_00206"/>
    </source>
</evidence>
<evidence type="ECO:0000255" key="2">
    <source>
        <dbReference type="PROSITE-ProRule" id="PRU01266"/>
    </source>
</evidence>
<protein>
    <recommendedName>
        <fullName evidence="1">Lipoyl synthase</fullName>
        <ecNumber evidence="1">2.8.1.8</ecNumber>
    </recommendedName>
    <alternativeName>
        <fullName evidence="1">Lip-syn</fullName>
        <shortName evidence="1">LS</shortName>
    </alternativeName>
    <alternativeName>
        <fullName evidence="1">Lipoate synthase</fullName>
    </alternativeName>
    <alternativeName>
        <fullName evidence="1">Lipoic acid synthase</fullName>
    </alternativeName>
    <alternativeName>
        <fullName evidence="1">Sulfur insertion protein LipA</fullName>
    </alternativeName>
</protein>
<gene>
    <name evidence="1" type="primary">lipA</name>
    <name type="ordered locus">HI_0026</name>
</gene>
<reference key="1">
    <citation type="journal article" date="1995" name="Science">
        <title>Whole-genome random sequencing and assembly of Haemophilus influenzae Rd.</title>
        <authorList>
            <person name="Fleischmann R.D."/>
            <person name="Adams M.D."/>
            <person name="White O."/>
            <person name="Clayton R.A."/>
            <person name="Kirkness E.F."/>
            <person name="Kerlavage A.R."/>
            <person name="Bult C.J."/>
            <person name="Tomb J.-F."/>
            <person name="Dougherty B.A."/>
            <person name="Merrick J.M."/>
            <person name="McKenney K."/>
            <person name="Sutton G.G."/>
            <person name="FitzHugh W."/>
            <person name="Fields C.A."/>
            <person name="Gocayne J.D."/>
            <person name="Scott J.D."/>
            <person name="Shirley R."/>
            <person name="Liu L.-I."/>
            <person name="Glodek A."/>
            <person name="Kelley J.M."/>
            <person name="Weidman J.F."/>
            <person name="Phillips C.A."/>
            <person name="Spriggs T."/>
            <person name="Hedblom E."/>
            <person name="Cotton M.D."/>
            <person name="Utterback T.R."/>
            <person name="Hanna M.C."/>
            <person name="Nguyen D.T."/>
            <person name="Saudek D.M."/>
            <person name="Brandon R.C."/>
            <person name="Fine L.D."/>
            <person name="Fritchman J.L."/>
            <person name="Fuhrmann J.L."/>
            <person name="Geoghagen N.S.M."/>
            <person name="Gnehm C.L."/>
            <person name="McDonald L.A."/>
            <person name="Small K.V."/>
            <person name="Fraser C.M."/>
            <person name="Smith H.O."/>
            <person name="Venter J.C."/>
        </authorList>
    </citation>
    <scope>NUCLEOTIDE SEQUENCE [LARGE SCALE GENOMIC DNA]</scope>
    <source>
        <strain>ATCC 51907 / DSM 11121 / KW20 / Rd</strain>
    </source>
</reference>
<accession>P44463</accession>
<proteinExistence type="inferred from homology"/>
<comment type="function">
    <text evidence="1">Catalyzes the radical-mediated insertion of two sulfur atoms into the C-6 and C-8 positions of the octanoyl moiety bound to the lipoyl domains of lipoate-dependent enzymes, thereby converting the octanoylated domains into lipoylated derivatives.</text>
</comment>
<comment type="catalytic activity">
    <reaction evidence="1">
        <text>[[Fe-S] cluster scaffold protein carrying a second [4Fe-4S](2+) cluster] + N(6)-octanoyl-L-lysyl-[protein] + 2 oxidized [2Fe-2S]-[ferredoxin] + 2 S-adenosyl-L-methionine + 4 H(+) = [[Fe-S] cluster scaffold protein] + N(6)-[(R)-dihydrolipoyl]-L-lysyl-[protein] + 4 Fe(3+) + 2 hydrogen sulfide + 2 5'-deoxyadenosine + 2 L-methionine + 2 reduced [2Fe-2S]-[ferredoxin]</text>
        <dbReference type="Rhea" id="RHEA:16585"/>
        <dbReference type="Rhea" id="RHEA-COMP:9928"/>
        <dbReference type="Rhea" id="RHEA-COMP:10000"/>
        <dbReference type="Rhea" id="RHEA-COMP:10001"/>
        <dbReference type="Rhea" id="RHEA-COMP:10475"/>
        <dbReference type="Rhea" id="RHEA-COMP:14568"/>
        <dbReference type="Rhea" id="RHEA-COMP:14569"/>
        <dbReference type="ChEBI" id="CHEBI:15378"/>
        <dbReference type="ChEBI" id="CHEBI:17319"/>
        <dbReference type="ChEBI" id="CHEBI:29034"/>
        <dbReference type="ChEBI" id="CHEBI:29919"/>
        <dbReference type="ChEBI" id="CHEBI:33722"/>
        <dbReference type="ChEBI" id="CHEBI:33737"/>
        <dbReference type="ChEBI" id="CHEBI:33738"/>
        <dbReference type="ChEBI" id="CHEBI:57844"/>
        <dbReference type="ChEBI" id="CHEBI:59789"/>
        <dbReference type="ChEBI" id="CHEBI:78809"/>
        <dbReference type="ChEBI" id="CHEBI:83100"/>
        <dbReference type="EC" id="2.8.1.8"/>
    </reaction>
</comment>
<comment type="cofactor">
    <cofactor evidence="1">
        <name>[4Fe-4S] cluster</name>
        <dbReference type="ChEBI" id="CHEBI:49883"/>
    </cofactor>
    <text evidence="1">Binds 2 [4Fe-4S] clusters per subunit. One cluster is coordinated with 3 cysteines and an exchangeable S-adenosyl-L-methionine.</text>
</comment>
<comment type="pathway">
    <text evidence="1">Protein modification; protein lipoylation via endogenous pathway; protein N(6)-(lipoyl)lysine from octanoyl-[acyl-carrier-protein]: step 2/2.</text>
</comment>
<comment type="subcellular location">
    <subcellularLocation>
        <location evidence="1">Cytoplasm</location>
    </subcellularLocation>
</comment>
<comment type="similarity">
    <text evidence="1">Belongs to the radical SAM superfamily. Lipoyl synthase family.</text>
</comment>
<organism>
    <name type="scientific">Haemophilus influenzae (strain ATCC 51907 / DSM 11121 / KW20 / Rd)</name>
    <dbReference type="NCBI Taxonomy" id="71421"/>
    <lineage>
        <taxon>Bacteria</taxon>
        <taxon>Pseudomonadati</taxon>
        <taxon>Pseudomonadota</taxon>
        <taxon>Gammaproteobacteria</taxon>
        <taxon>Pasteurellales</taxon>
        <taxon>Pasteurellaceae</taxon>
        <taxon>Haemophilus</taxon>
    </lineage>
</organism>
<dbReference type="EC" id="2.8.1.8" evidence="1"/>
<dbReference type="EMBL" id="L42023">
    <property type="protein sequence ID" value="AAC21704.1"/>
    <property type="molecule type" value="Genomic_DNA"/>
</dbReference>
<dbReference type="PIR" id="G64043">
    <property type="entry name" value="G64043"/>
</dbReference>
<dbReference type="RefSeq" id="NP_438199.1">
    <property type="nucleotide sequence ID" value="NC_000907.1"/>
</dbReference>
<dbReference type="SMR" id="P44463"/>
<dbReference type="STRING" id="71421.HI_0026"/>
<dbReference type="EnsemblBacteria" id="AAC21704">
    <property type="protein sequence ID" value="AAC21704"/>
    <property type="gene ID" value="HI_0026"/>
</dbReference>
<dbReference type="KEGG" id="hin:HI_0026"/>
<dbReference type="PATRIC" id="fig|71421.8.peg.26"/>
<dbReference type="eggNOG" id="COG0320">
    <property type="taxonomic scope" value="Bacteria"/>
</dbReference>
<dbReference type="HOGENOM" id="CLU_033144_2_1_6"/>
<dbReference type="OrthoDB" id="9787898at2"/>
<dbReference type="PhylomeDB" id="P44463"/>
<dbReference type="BioCyc" id="HINF71421:G1GJ1-26-MONOMER"/>
<dbReference type="UniPathway" id="UPA00538">
    <property type="reaction ID" value="UER00593"/>
</dbReference>
<dbReference type="Proteomes" id="UP000000579">
    <property type="component" value="Chromosome"/>
</dbReference>
<dbReference type="GO" id="GO:0005737">
    <property type="term" value="C:cytoplasm"/>
    <property type="evidence" value="ECO:0007669"/>
    <property type="project" value="UniProtKB-SubCell"/>
</dbReference>
<dbReference type="GO" id="GO:0051539">
    <property type="term" value="F:4 iron, 4 sulfur cluster binding"/>
    <property type="evidence" value="ECO:0007669"/>
    <property type="project" value="UniProtKB-UniRule"/>
</dbReference>
<dbReference type="GO" id="GO:0016992">
    <property type="term" value="F:lipoate synthase activity"/>
    <property type="evidence" value="ECO:0007669"/>
    <property type="project" value="UniProtKB-UniRule"/>
</dbReference>
<dbReference type="GO" id="GO:0046872">
    <property type="term" value="F:metal ion binding"/>
    <property type="evidence" value="ECO:0007669"/>
    <property type="project" value="UniProtKB-KW"/>
</dbReference>
<dbReference type="CDD" id="cd01335">
    <property type="entry name" value="Radical_SAM"/>
    <property type="match status" value="1"/>
</dbReference>
<dbReference type="FunFam" id="3.20.20.70:FF:000023">
    <property type="entry name" value="Lipoyl synthase"/>
    <property type="match status" value="1"/>
</dbReference>
<dbReference type="Gene3D" id="3.20.20.70">
    <property type="entry name" value="Aldolase class I"/>
    <property type="match status" value="1"/>
</dbReference>
<dbReference type="HAMAP" id="MF_00206">
    <property type="entry name" value="Lipoyl_synth"/>
    <property type="match status" value="1"/>
</dbReference>
<dbReference type="InterPro" id="IPR013785">
    <property type="entry name" value="Aldolase_TIM"/>
</dbReference>
<dbReference type="InterPro" id="IPR006638">
    <property type="entry name" value="Elp3/MiaA/NifB-like_rSAM"/>
</dbReference>
<dbReference type="InterPro" id="IPR003698">
    <property type="entry name" value="Lipoyl_synth"/>
</dbReference>
<dbReference type="InterPro" id="IPR007197">
    <property type="entry name" value="rSAM"/>
</dbReference>
<dbReference type="NCBIfam" id="TIGR00510">
    <property type="entry name" value="lipA"/>
    <property type="match status" value="1"/>
</dbReference>
<dbReference type="NCBIfam" id="NF004019">
    <property type="entry name" value="PRK05481.1"/>
    <property type="match status" value="1"/>
</dbReference>
<dbReference type="NCBIfam" id="NF009544">
    <property type="entry name" value="PRK12928.1"/>
    <property type="match status" value="1"/>
</dbReference>
<dbReference type="PANTHER" id="PTHR10949">
    <property type="entry name" value="LIPOYL SYNTHASE"/>
    <property type="match status" value="1"/>
</dbReference>
<dbReference type="PANTHER" id="PTHR10949:SF0">
    <property type="entry name" value="LIPOYL SYNTHASE, MITOCHONDRIAL"/>
    <property type="match status" value="1"/>
</dbReference>
<dbReference type="Pfam" id="PF04055">
    <property type="entry name" value="Radical_SAM"/>
    <property type="match status" value="1"/>
</dbReference>
<dbReference type="PIRSF" id="PIRSF005963">
    <property type="entry name" value="Lipoyl_synth"/>
    <property type="match status" value="1"/>
</dbReference>
<dbReference type="SFLD" id="SFLDF00271">
    <property type="entry name" value="lipoyl_synthase"/>
    <property type="match status" value="1"/>
</dbReference>
<dbReference type="SFLD" id="SFLDG01058">
    <property type="entry name" value="lipoyl_synthase_like"/>
    <property type="match status" value="1"/>
</dbReference>
<dbReference type="SMART" id="SM00729">
    <property type="entry name" value="Elp3"/>
    <property type="match status" value="1"/>
</dbReference>
<dbReference type="SUPFAM" id="SSF102114">
    <property type="entry name" value="Radical SAM enzymes"/>
    <property type="match status" value="1"/>
</dbReference>
<dbReference type="PROSITE" id="PS51918">
    <property type="entry name" value="RADICAL_SAM"/>
    <property type="match status" value="1"/>
</dbReference>
<sequence length="320" mass="36197">MSTPFKMERGVKYRDAAKTSIIPVKNIDPNQDLLKKPEWMKIKLPASSAKIESIKNGMRRHGLHSVCEEASCPNLHECFNHGTATFMILGAICTRRCPFCDVAHGKPLPPDPEEPQKLAETIQDMKLKYVVITSVDRDDLPDRGAGHFSECVKAVRELNPNIKIEILVPDFRGRITQALEKLKDNPPDVFNHNLENVPRLYKEIRPGADYEWSLKLLREFKEIFPNIPTKSGLMVGLGETNEEILQVMQDLRDNGVTMLTLGQYLQPSRHHLPVARYVPPTEFDEFRDKANEMGFEHAACGPFVRSSYHADLQASGGLVK</sequence>
<keyword id="KW-0004">4Fe-4S</keyword>
<keyword id="KW-0963">Cytoplasm</keyword>
<keyword id="KW-0408">Iron</keyword>
<keyword id="KW-0411">Iron-sulfur</keyword>
<keyword id="KW-0479">Metal-binding</keyword>
<keyword id="KW-1185">Reference proteome</keyword>
<keyword id="KW-0949">S-adenosyl-L-methionine</keyword>
<keyword id="KW-0808">Transferase</keyword>
<name>LIPA_HAEIN</name>
<feature type="chain" id="PRO_0000102320" description="Lipoyl synthase">
    <location>
        <begin position="1"/>
        <end position="320"/>
    </location>
</feature>
<feature type="domain" description="Radical SAM core" evidence="2">
    <location>
        <begin position="79"/>
        <end position="296"/>
    </location>
</feature>
<feature type="binding site" evidence="1">
    <location>
        <position position="67"/>
    </location>
    <ligand>
        <name>[4Fe-4S] cluster</name>
        <dbReference type="ChEBI" id="CHEBI:49883"/>
        <label>1</label>
    </ligand>
</feature>
<feature type="binding site" evidence="1">
    <location>
        <position position="72"/>
    </location>
    <ligand>
        <name>[4Fe-4S] cluster</name>
        <dbReference type="ChEBI" id="CHEBI:49883"/>
        <label>1</label>
    </ligand>
</feature>
<feature type="binding site" evidence="1">
    <location>
        <position position="78"/>
    </location>
    <ligand>
        <name>[4Fe-4S] cluster</name>
        <dbReference type="ChEBI" id="CHEBI:49883"/>
        <label>1</label>
    </ligand>
</feature>
<feature type="binding site" evidence="1">
    <location>
        <position position="93"/>
    </location>
    <ligand>
        <name>[4Fe-4S] cluster</name>
        <dbReference type="ChEBI" id="CHEBI:49883"/>
        <label>2</label>
        <note>4Fe-4S-S-AdoMet</note>
    </ligand>
</feature>
<feature type="binding site" evidence="1">
    <location>
        <position position="97"/>
    </location>
    <ligand>
        <name>[4Fe-4S] cluster</name>
        <dbReference type="ChEBI" id="CHEBI:49883"/>
        <label>2</label>
        <note>4Fe-4S-S-AdoMet</note>
    </ligand>
</feature>
<feature type="binding site" evidence="1">
    <location>
        <position position="100"/>
    </location>
    <ligand>
        <name>[4Fe-4S] cluster</name>
        <dbReference type="ChEBI" id="CHEBI:49883"/>
        <label>2</label>
        <note>4Fe-4S-S-AdoMet</note>
    </ligand>
</feature>
<feature type="binding site" evidence="1">
    <location>
        <position position="307"/>
    </location>
    <ligand>
        <name>[4Fe-4S] cluster</name>
        <dbReference type="ChEBI" id="CHEBI:49883"/>
        <label>1</label>
    </ligand>
</feature>